<protein>
    <recommendedName>
        <fullName evidence="1">Flavohemoprotein</fullName>
    </recommendedName>
    <alternativeName>
        <fullName evidence="1">Flavohemoglobin</fullName>
    </alternativeName>
    <alternativeName>
        <fullName evidence="1">Hemoglobin-like protein</fullName>
    </alternativeName>
    <alternativeName>
        <fullName evidence="1">Nitric oxide dioxygenase</fullName>
        <shortName evidence="1">NO oxygenase</shortName>
        <shortName evidence="1">NOD</shortName>
        <ecNumber evidence="1">1.14.12.17</ecNumber>
    </alternativeName>
</protein>
<accession>Q8ETH0</accession>
<proteinExistence type="inferred from homology"/>
<name>HMP_OCEIH</name>
<dbReference type="EC" id="1.14.12.17" evidence="1"/>
<dbReference type="EMBL" id="BA000028">
    <property type="protein sequence ID" value="BAC12247.1"/>
    <property type="molecule type" value="Genomic_DNA"/>
</dbReference>
<dbReference type="RefSeq" id="WP_011064693.1">
    <property type="nucleotide sequence ID" value="NC_004193.1"/>
</dbReference>
<dbReference type="SMR" id="Q8ETH0"/>
<dbReference type="STRING" id="221109.gene:10732494"/>
<dbReference type="KEGG" id="oih:OB0291"/>
<dbReference type="eggNOG" id="COG1017">
    <property type="taxonomic scope" value="Bacteria"/>
</dbReference>
<dbReference type="eggNOG" id="COG1018">
    <property type="taxonomic scope" value="Bacteria"/>
</dbReference>
<dbReference type="HOGENOM" id="CLU_003827_12_0_9"/>
<dbReference type="OrthoDB" id="9801223at2"/>
<dbReference type="PhylomeDB" id="Q8ETH0"/>
<dbReference type="Proteomes" id="UP000000822">
    <property type="component" value="Chromosome"/>
</dbReference>
<dbReference type="GO" id="GO:0071949">
    <property type="term" value="F:FAD binding"/>
    <property type="evidence" value="ECO:0007669"/>
    <property type="project" value="InterPro"/>
</dbReference>
<dbReference type="GO" id="GO:0020037">
    <property type="term" value="F:heme binding"/>
    <property type="evidence" value="ECO:0007669"/>
    <property type="project" value="InterPro"/>
</dbReference>
<dbReference type="GO" id="GO:0046872">
    <property type="term" value="F:metal ion binding"/>
    <property type="evidence" value="ECO:0007669"/>
    <property type="project" value="UniProtKB-KW"/>
</dbReference>
<dbReference type="GO" id="GO:0008941">
    <property type="term" value="F:nitric oxide dioxygenase NAD(P)H activity"/>
    <property type="evidence" value="ECO:0007669"/>
    <property type="project" value="UniProtKB-UniRule"/>
</dbReference>
<dbReference type="GO" id="GO:0019825">
    <property type="term" value="F:oxygen binding"/>
    <property type="evidence" value="ECO:0007669"/>
    <property type="project" value="InterPro"/>
</dbReference>
<dbReference type="GO" id="GO:0005344">
    <property type="term" value="F:oxygen carrier activity"/>
    <property type="evidence" value="ECO:0007669"/>
    <property type="project" value="UniProtKB-UniRule"/>
</dbReference>
<dbReference type="GO" id="GO:0071500">
    <property type="term" value="P:cellular response to nitrosative stress"/>
    <property type="evidence" value="ECO:0007669"/>
    <property type="project" value="TreeGrafter"/>
</dbReference>
<dbReference type="GO" id="GO:0046210">
    <property type="term" value="P:nitric oxide catabolic process"/>
    <property type="evidence" value="ECO:0007669"/>
    <property type="project" value="TreeGrafter"/>
</dbReference>
<dbReference type="GO" id="GO:0009636">
    <property type="term" value="P:response to toxic substance"/>
    <property type="evidence" value="ECO:0007669"/>
    <property type="project" value="UniProtKB-KW"/>
</dbReference>
<dbReference type="CDD" id="cd06184">
    <property type="entry name" value="flavohem_like_fad_nad_binding"/>
    <property type="match status" value="1"/>
</dbReference>
<dbReference type="CDD" id="cd14777">
    <property type="entry name" value="Yhb1-globin-like"/>
    <property type="match status" value="1"/>
</dbReference>
<dbReference type="FunFam" id="1.10.490.10:FF:000003">
    <property type="entry name" value="Flavohemoprotein"/>
    <property type="match status" value="1"/>
</dbReference>
<dbReference type="FunFam" id="2.40.30.10:FF:000034">
    <property type="entry name" value="Flavohemoprotein"/>
    <property type="match status" value="1"/>
</dbReference>
<dbReference type="FunFam" id="3.40.50.80:FF:000010">
    <property type="entry name" value="Flavohemoprotein"/>
    <property type="match status" value="1"/>
</dbReference>
<dbReference type="Gene3D" id="1.10.490.10">
    <property type="entry name" value="Globins"/>
    <property type="match status" value="1"/>
</dbReference>
<dbReference type="Gene3D" id="3.40.50.80">
    <property type="entry name" value="Nucleotide-binding domain of ferredoxin-NADP reductase (FNR) module"/>
    <property type="match status" value="1"/>
</dbReference>
<dbReference type="Gene3D" id="2.40.30.10">
    <property type="entry name" value="Translation factors"/>
    <property type="match status" value="1"/>
</dbReference>
<dbReference type="HAMAP" id="MF_01252">
    <property type="entry name" value="Hmp"/>
    <property type="match status" value="1"/>
</dbReference>
<dbReference type="InterPro" id="IPR008333">
    <property type="entry name" value="Cbr1-like_FAD-bd_dom"/>
</dbReference>
<dbReference type="InterPro" id="IPR017927">
    <property type="entry name" value="FAD-bd_FR_type"/>
</dbReference>
<dbReference type="InterPro" id="IPR001709">
    <property type="entry name" value="Flavoprot_Pyr_Nucl_cyt_Rdtase"/>
</dbReference>
<dbReference type="InterPro" id="IPR039261">
    <property type="entry name" value="FNR_nucleotide-bd"/>
</dbReference>
<dbReference type="InterPro" id="IPR000971">
    <property type="entry name" value="Globin"/>
</dbReference>
<dbReference type="InterPro" id="IPR009050">
    <property type="entry name" value="Globin-like_sf"/>
</dbReference>
<dbReference type="InterPro" id="IPR012292">
    <property type="entry name" value="Globin/Proto"/>
</dbReference>
<dbReference type="InterPro" id="IPR023950">
    <property type="entry name" value="Hmp"/>
</dbReference>
<dbReference type="InterPro" id="IPR001433">
    <property type="entry name" value="OxRdtase_FAD/NAD-bd"/>
</dbReference>
<dbReference type="InterPro" id="IPR017938">
    <property type="entry name" value="Riboflavin_synthase-like_b-brl"/>
</dbReference>
<dbReference type="NCBIfam" id="NF009805">
    <property type="entry name" value="PRK13289.1"/>
    <property type="match status" value="1"/>
</dbReference>
<dbReference type="PANTHER" id="PTHR43396">
    <property type="entry name" value="FLAVOHEMOPROTEIN"/>
    <property type="match status" value="1"/>
</dbReference>
<dbReference type="PANTHER" id="PTHR43396:SF3">
    <property type="entry name" value="FLAVOHEMOPROTEIN"/>
    <property type="match status" value="1"/>
</dbReference>
<dbReference type="Pfam" id="PF00970">
    <property type="entry name" value="FAD_binding_6"/>
    <property type="match status" value="1"/>
</dbReference>
<dbReference type="Pfam" id="PF00042">
    <property type="entry name" value="Globin"/>
    <property type="match status" value="1"/>
</dbReference>
<dbReference type="Pfam" id="PF00175">
    <property type="entry name" value="NAD_binding_1"/>
    <property type="match status" value="1"/>
</dbReference>
<dbReference type="PRINTS" id="PR00371">
    <property type="entry name" value="FPNCR"/>
</dbReference>
<dbReference type="PRINTS" id="PR00410">
    <property type="entry name" value="PHEHYDRXLASE"/>
</dbReference>
<dbReference type="SUPFAM" id="SSF52343">
    <property type="entry name" value="Ferredoxin reductase-like, C-terminal NADP-linked domain"/>
    <property type="match status" value="1"/>
</dbReference>
<dbReference type="SUPFAM" id="SSF46458">
    <property type="entry name" value="Globin-like"/>
    <property type="match status" value="1"/>
</dbReference>
<dbReference type="SUPFAM" id="SSF63380">
    <property type="entry name" value="Riboflavin synthase domain-like"/>
    <property type="match status" value="1"/>
</dbReference>
<dbReference type="PROSITE" id="PS51384">
    <property type="entry name" value="FAD_FR"/>
    <property type="match status" value="1"/>
</dbReference>
<dbReference type="PROSITE" id="PS01033">
    <property type="entry name" value="GLOBIN"/>
    <property type="match status" value="1"/>
</dbReference>
<organism>
    <name type="scientific">Oceanobacillus iheyensis (strain DSM 14371 / CIP 107618 / JCM 11309 / KCTC 3954 / HTE831)</name>
    <dbReference type="NCBI Taxonomy" id="221109"/>
    <lineage>
        <taxon>Bacteria</taxon>
        <taxon>Bacillati</taxon>
        <taxon>Bacillota</taxon>
        <taxon>Bacilli</taxon>
        <taxon>Bacillales</taxon>
        <taxon>Bacillaceae</taxon>
        <taxon>Oceanobacillus</taxon>
    </lineage>
</organism>
<reference key="1">
    <citation type="journal article" date="2002" name="Nucleic Acids Res.">
        <title>Genome sequence of Oceanobacillus iheyensis isolated from the Iheya Ridge and its unexpected adaptive capabilities to extreme environments.</title>
        <authorList>
            <person name="Takami H."/>
            <person name="Takaki Y."/>
            <person name="Uchiyama I."/>
        </authorList>
    </citation>
    <scope>NUCLEOTIDE SEQUENCE [LARGE SCALE GENOMIC DNA]</scope>
    <source>
        <strain>DSM 14371 / CIP 107618 / JCM 11309 / KCTC 3954 / HTE831</strain>
    </source>
</reference>
<gene>
    <name evidence="1" type="primary">hmp</name>
    <name type="ordered locus">OB0291</name>
</gene>
<keyword id="KW-0216">Detoxification</keyword>
<keyword id="KW-0274">FAD</keyword>
<keyword id="KW-0285">Flavoprotein</keyword>
<keyword id="KW-0349">Heme</keyword>
<keyword id="KW-0408">Iron</keyword>
<keyword id="KW-0479">Metal-binding</keyword>
<keyword id="KW-0520">NAD</keyword>
<keyword id="KW-0521">NADP</keyword>
<keyword id="KW-0560">Oxidoreductase</keyword>
<keyword id="KW-0561">Oxygen transport</keyword>
<keyword id="KW-1185">Reference proteome</keyword>
<keyword id="KW-0813">Transport</keyword>
<comment type="function">
    <text evidence="1">Is involved in NO detoxification in an aerobic process, termed nitric oxide dioxygenase (NOD) reaction that utilizes O(2) and NAD(P)H to convert NO to nitrate, which protects the bacterium from various noxious nitrogen compounds. Therefore, plays a central role in the inducible response to nitrosative stress.</text>
</comment>
<comment type="catalytic activity">
    <reaction evidence="1">
        <text>2 nitric oxide + NADPH + 2 O2 = 2 nitrate + NADP(+) + H(+)</text>
        <dbReference type="Rhea" id="RHEA:19465"/>
        <dbReference type="ChEBI" id="CHEBI:15378"/>
        <dbReference type="ChEBI" id="CHEBI:15379"/>
        <dbReference type="ChEBI" id="CHEBI:16480"/>
        <dbReference type="ChEBI" id="CHEBI:17632"/>
        <dbReference type="ChEBI" id="CHEBI:57783"/>
        <dbReference type="ChEBI" id="CHEBI:58349"/>
        <dbReference type="EC" id="1.14.12.17"/>
    </reaction>
</comment>
<comment type="catalytic activity">
    <reaction evidence="1">
        <text>2 nitric oxide + NADH + 2 O2 = 2 nitrate + NAD(+) + H(+)</text>
        <dbReference type="Rhea" id="RHEA:19469"/>
        <dbReference type="ChEBI" id="CHEBI:15378"/>
        <dbReference type="ChEBI" id="CHEBI:15379"/>
        <dbReference type="ChEBI" id="CHEBI:16480"/>
        <dbReference type="ChEBI" id="CHEBI:17632"/>
        <dbReference type="ChEBI" id="CHEBI:57540"/>
        <dbReference type="ChEBI" id="CHEBI:57945"/>
        <dbReference type="EC" id="1.14.12.17"/>
    </reaction>
</comment>
<comment type="cofactor">
    <cofactor evidence="1">
        <name>heme b</name>
        <dbReference type="ChEBI" id="CHEBI:60344"/>
    </cofactor>
    <text evidence="1">Binds 1 heme b (iron(II)-protoporphyrin IX) group per subunit.</text>
</comment>
<comment type="cofactor">
    <cofactor evidence="1">
        <name>FAD</name>
        <dbReference type="ChEBI" id="CHEBI:57692"/>
    </cofactor>
    <text evidence="1">Binds 1 FAD per subunit.</text>
</comment>
<comment type="domain">
    <text>Consists of two distinct domains; an N-terminal heme-containing oxygen-binding domain and a C-terminal reductase domain with binding sites for FAD and NAD(P)H.</text>
</comment>
<comment type="similarity">
    <text evidence="1">Belongs to the globin family. Two-domain flavohemoproteins subfamily.</text>
</comment>
<comment type="similarity">
    <text evidence="1">In the C-terminal section; belongs to the flavoprotein pyridine nucleotide cytochrome reductase family.</text>
</comment>
<feature type="chain" id="PRO_0000052436" description="Flavohemoprotein">
    <location>
        <begin position="1"/>
        <end position="406"/>
    </location>
</feature>
<feature type="domain" description="Globin" evidence="2">
    <location>
        <begin position="6"/>
        <end position="144"/>
    </location>
</feature>
<feature type="domain" description="FAD-binding FR-type" evidence="1">
    <location>
        <begin position="158"/>
        <end position="267"/>
    </location>
</feature>
<feature type="region of interest" description="Reductase">
    <location>
        <begin position="155"/>
        <end position="406"/>
    </location>
</feature>
<feature type="active site" description="Charge relay system" evidence="1">
    <location>
        <position position="101"/>
    </location>
</feature>
<feature type="active site" description="Charge relay system" evidence="1">
    <location>
        <position position="143"/>
    </location>
</feature>
<feature type="binding site" description="proximal binding residue" evidence="1">
    <location>
        <position position="91"/>
    </location>
    <ligand>
        <name>heme b</name>
        <dbReference type="ChEBI" id="CHEBI:60344"/>
    </ligand>
    <ligandPart>
        <name>Fe</name>
        <dbReference type="ChEBI" id="CHEBI:18248"/>
    </ligandPart>
</feature>
<feature type="binding site" evidence="1">
    <location>
        <position position="196"/>
    </location>
    <ligand>
        <name>FAD</name>
        <dbReference type="ChEBI" id="CHEBI:57692"/>
    </ligand>
</feature>
<feature type="binding site" evidence="1">
    <location>
        <begin position="212"/>
        <end position="215"/>
    </location>
    <ligand>
        <name>FAD</name>
        <dbReference type="ChEBI" id="CHEBI:57692"/>
    </ligand>
</feature>
<feature type="binding site" evidence="1">
    <location>
        <begin position="280"/>
        <end position="285"/>
    </location>
    <ligand>
        <name>NADP(+)</name>
        <dbReference type="ChEBI" id="CHEBI:58349"/>
    </ligand>
</feature>
<feature type="binding site" evidence="1">
    <location>
        <begin position="397"/>
        <end position="400"/>
    </location>
    <ligand>
        <name>FAD</name>
        <dbReference type="ChEBI" id="CHEBI:57692"/>
    </ligand>
</feature>
<feature type="site" description="Involved in heme-bound ligand stabilization and O-O bond activation" evidence="1">
    <location>
        <position position="35"/>
    </location>
</feature>
<feature type="site" description="Influences the redox potential of the prosthetic heme and FAD groups" evidence="1">
    <location>
        <position position="90"/>
    </location>
</feature>
<feature type="site" description="Influences the redox potential of the prosthetic heme and FAD groups" evidence="1">
    <location>
        <position position="396"/>
    </location>
</feature>
<sequence length="406" mass="45811">MSNTTVLLDKKTTEIIKATVPVLKEHGEAITKHFYKILLENNPELKNVFNQTNQRKGAQSKALANTVYAAAANIEKLEEILPHVKQIAHKHVSLNIKPEQYPIVGKYLLIAIKEVLGDAATDEIIEAWEKAYFVIADIFISVEKEMYNEKKNQIGGWTGFRDFKVIKKVKESKEITSFYLKPDDNLPITTFIPGQYITIKAQIESEAYVHLRQYSLSTAPGKDYYRISVKREASNQPIGVVSNYLHTSVEVGSVLPISAPAGDFILDERDHRPLVLISGGVGLTPIMSMLESVVEHQPNRNVVFIHAAKSIDHQAMRKRVSEIAKSKEQVKQYVVYSNPTNRTDGDKQGYIDYEWLKEVIPTKDAAFYLCGPKPFMSAINNDLQNMNIAQNDIHMELFGPLEPIAK</sequence>
<evidence type="ECO:0000255" key="1">
    <source>
        <dbReference type="HAMAP-Rule" id="MF_01252"/>
    </source>
</evidence>
<evidence type="ECO:0000255" key="2">
    <source>
        <dbReference type="PROSITE-ProRule" id="PRU00238"/>
    </source>
</evidence>